<dbReference type="EC" id="7.6.2.14" evidence="1"/>
<dbReference type="EMBL" id="CP000058">
    <property type="protein sequence ID" value="AAZ33012.1"/>
    <property type="molecule type" value="Genomic_DNA"/>
</dbReference>
<dbReference type="RefSeq" id="WP_005743637.1">
    <property type="nucleotide sequence ID" value="NC_005773.3"/>
</dbReference>
<dbReference type="SMR" id="Q48IB9"/>
<dbReference type="KEGG" id="psp:PSPPH_2672"/>
<dbReference type="eggNOG" id="COG1116">
    <property type="taxonomic scope" value="Bacteria"/>
</dbReference>
<dbReference type="HOGENOM" id="CLU_000604_1_22_6"/>
<dbReference type="Proteomes" id="UP000000551">
    <property type="component" value="Chromosome"/>
</dbReference>
<dbReference type="GO" id="GO:0005886">
    <property type="term" value="C:plasma membrane"/>
    <property type="evidence" value="ECO:0007669"/>
    <property type="project" value="UniProtKB-SubCell"/>
</dbReference>
<dbReference type="GO" id="GO:0005524">
    <property type="term" value="F:ATP binding"/>
    <property type="evidence" value="ECO:0007669"/>
    <property type="project" value="UniProtKB-KW"/>
</dbReference>
<dbReference type="GO" id="GO:0016887">
    <property type="term" value="F:ATP hydrolysis activity"/>
    <property type="evidence" value="ECO:0007669"/>
    <property type="project" value="InterPro"/>
</dbReference>
<dbReference type="CDD" id="cd03293">
    <property type="entry name" value="ABC_NrtD_SsuB_transporters"/>
    <property type="match status" value="1"/>
</dbReference>
<dbReference type="Gene3D" id="3.40.50.300">
    <property type="entry name" value="P-loop containing nucleotide triphosphate hydrolases"/>
    <property type="match status" value="1"/>
</dbReference>
<dbReference type="InterPro" id="IPR003593">
    <property type="entry name" value="AAA+_ATPase"/>
</dbReference>
<dbReference type="InterPro" id="IPR003439">
    <property type="entry name" value="ABC_transporter-like_ATP-bd"/>
</dbReference>
<dbReference type="InterPro" id="IPR017871">
    <property type="entry name" value="ABC_transporter-like_CS"/>
</dbReference>
<dbReference type="InterPro" id="IPR050166">
    <property type="entry name" value="ABC_transporter_ATP-bind"/>
</dbReference>
<dbReference type="InterPro" id="IPR027417">
    <property type="entry name" value="P-loop_NTPase"/>
</dbReference>
<dbReference type="PANTHER" id="PTHR42788:SF19">
    <property type="entry name" value="ALIPHATIC SULFONATES IMPORT ATP-BINDING PROTEIN SSUB 2"/>
    <property type="match status" value="1"/>
</dbReference>
<dbReference type="PANTHER" id="PTHR42788">
    <property type="entry name" value="TAURINE IMPORT ATP-BINDING PROTEIN-RELATED"/>
    <property type="match status" value="1"/>
</dbReference>
<dbReference type="Pfam" id="PF00005">
    <property type="entry name" value="ABC_tran"/>
    <property type="match status" value="1"/>
</dbReference>
<dbReference type="SMART" id="SM00382">
    <property type="entry name" value="AAA"/>
    <property type="match status" value="1"/>
</dbReference>
<dbReference type="SUPFAM" id="SSF52540">
    <property type="entry name" value="P-loop containing nucleoside triphosphate hydrolases"/>
    <property type="match status" value="1"/>
</dbReference>
<dbReference type="PROSITE" id="PS00211">
    <property type="entry name" value="ABC_TRANSPORTER_1"/>
    <property type="match status" value="1"/>
</dbReference>
<dbReference type="PROSITE" id="PS50893">
    <property type="entry name" value="ABC_TRANSPORTER_2"/>
    <property type="match status" value="1"/>
</dbReference>
<dbReference type="PROSITE" id="PS51291">
    <property type="entry name" value="SSUB"/>
    <property type="match status" value="1"/>
</dbReference>
<comment type="function">
    <text evidence="1">Part of the ABC transporter complex SsuABC involved in aliphatic sulfonates import. Responsible for energy coupling to the transport system.</text>
</comment>
<comment type="catalytic activity">
    <reaction evidence="1">
        <text>ATP + H2O + aliphatic sulfonate-[sulfonate-binding protein]Side 1 = ADP + phosphate + aliphatic sulfonateSide 2 + [sulfonate-binding protein]Side 1.</text>
        <dbReference type="EC" id="7.6.2.14"/>
    </reaction>
</comment>
<comment type="subunit">
    <text evidence="1">The complex is composed of two ATP-binding proteins (SsuB), two transmembrane proteins (SsuC) and a solute-binding protein (SsuA).</text>
</comment>
<comment type="subcellular location">
    <subcellularLocation>
        <location evidence="1">Cell inner membrane</location>
        <topology evidence="1">Peripheral membrane protein</topology>
    </subcellularLocation>
</comment>
<comment type="similarity">
    <text evidence="1">Belongs to the ABC transporter superfamily. Aliphatic sulfonates importer (TC 3.A.1.17.2) family.</text>
</comment>
<gene>
    <name evidence="1" type="primary">ssuB1</name>
    <name type="ordered locus">PSPPH_2672</name>
</gene>
<feature type="chain" id="PRO_0000279937" description="Aliphatic sulfonates import ATP-binding protein SsuB 1">
    <location>
        <begin position="1"/>
        <end position="237"/>
    </location>
</feature>
<feature type="domain" description="ABC transporter" evidence="1">
    <location>
        <begin position="5"/>
        <end position="221"/>
    </location>
</feature>
<feature type="binding site" evidence="1">
    <location>
        <begin position="38"/>
        <end position="45"/>
    </location>
    <ligand>
        <name>ATP</name>
        <dbReference type="ChEBI" id="CHEBI:30616"/>
    </ligand>
</feature>
<proteinExistence type="inferred from homology"/>
<protein>
    <recommendedName>
        <fullName evidence="1">Aliphatic sulfonates import ATP-binding protein SsuB 1</fullName>
        <ecNumber evidence="1">7.6.2.14</ecNumber>
    </recommendedName>
</protein>
<accession>Q48IB9</accession>
<evidence type="ECO:0000255" key="1">
    <source>
        <dbReference type="HAMAP-Rule" id="MF_01724"/>
    </source>
</evidence>
<sequence length="237" mass="26019">MPESLMNIRVDRKAFAGNTVLQDIDLSLQSGEIVSLLGPSGCGKSTLLRIVAGLEQDFRGSVDNIEGEVAFVFQEPRLMPWLTVEQNIGFSDDAGYDRRWVGQLIEEVGLSGFADALPKALSGGMAQRVAIARGLYSHPTVLLLDEPFSAVDAFTRMKLQDLLLQLAERHAITLLLVTHDVDEALYLSDRVLVMGSRPGTITQQLPVGLQAPRDRRDPLLARLKAQALTELHQAHII</sequence>
<organism>
    <name type="scientific">Pseudomonas savastanoi pv. phaseolicola (strain 1448A / Race 6)</name>
    <name type="common">Pseudomonas syringae pv. phaseolicola (strain 1448A / Race 6)</name>
    <dbReference type="NCBI Taxonomy" id="264730"/>
    <lineage>
        <taxon>Bacteria</taxon>
        <taxon>Pseudomonadati</taxon>
        <taxon>Pseudomonadota</taxon>
        <taxon>Gammaproteobacteria</taxon>
        <taxon>Pseudomonadales</taxon>
        <taxon>Pseudomonadaceae</taxon>
        <taxon>Pseudomonas</taxon>
    </lineage>
</organism>
<keyword id="KW-0067">ATP-binding</keyword>
<keyword id="KW-0997">Cell inner membrane</keyword>
<keyword id="KW-1003">Cell membrane</keyword>
<keyword id="KW-0472">Membrane</keyword>
<keyword id="KW-0547">Nucleotide-binding</keyword>
<keyword id="KW-1278">Translocase</keyword>
<keyword id="KW-0813">Transport</keyword>
<name>SSUB1_PSE14</name>
<reference key="1">
    <citation type="journal article" date="2005" name="J. Bacteriol.">
        <title>Whole-genome sequence analysis of Pseudomonas syringae pv. phaseolicola 1448A reveals divergence among pathovars in genes involved in virulence and transposition.</title>
        <authorList>
            <person name="Joardar V."/>
            <person name="Lindeberg M."/>
            <person name="Jackson R.W."/>
            <person name="Selengut J."/>
            <person name="Dodson R."/>
            <person name="Brinkac L.M."/>
            <person name="Daugherty S.C."/>
            <person name="DeBoy R.T."/>
            <person name="Durkin A.S."/>
            <person name="Gwinn Giglio M."/>
            <person name="Madupu R."/>
            <person name="Nelson W.C."/>
            <person name="Rosovitz M.J."/>
            <person name="Sullivan S.A."/>
            <person name="Crabtree J."/>
            <person name="Creasy T."/>
            <person name="Davidsen T.M."/>
            <person name="Haft D.H."/>
            <person name="Zafar N."/>
            <person name="Zhou L."/>
            <person name="Halpin R."/>
            <person name="Holley T."/>
            <person name="Khouri H.M."/>
            <person name="Feldblyum T.V."/>
            <person name="White O."/>
            <person name="Fraser C.M."/>
            <person name="Chatterjee A.K."/>
            <person name="Cartinhour S."/>
            <person name="Schneider D."/>
            <person name="Mansfield J.W."/>
            <person name="Collmer A."/>
            <person name="Buell R."/>
        </authorList>
    </citation>
    <scope>NUCLEOTIDE SEQUENCE [LARGE SCALE GENOMIC DNA]</scope>
    <source>
        <strain>1448A / Race 6</strain>
    </source>
</reference>